<protein>
    <recommendedName>
        <fullName evidence="1">Small ribosomal subunit protein uS17</fullName>
    </recommendedName>
    <alternativeName>
        <fullName evidence="2">30S ribosomal protein S17</fullName>
    </alternativeName>
</protein>
<organism>
    <name type="scientific">Lactobacillus delbrueckii subsp. bulgaricus (strain ATCC BAA-365 / Lb-18)</name>
    <dbReference type="NCBI Taxonomy" id="321956"/>
    <lineage>
        <taxon>Bacteria</taxon>
        <taxon>Bacillati</taxon>
        <taxon>Bacillota</taxon>
        <taxon>Bacilli</taxon>
        <taxon>Lactobacillales</taxon>
        <taxon>Lactobacillaceae</taxon>
        <taxon>Lactobacillus</taxon>
    </lineage>
</organism>
<dbReference type="EMBL" id="CP000412">
    <property type="protein sequence ID" value="ABJ58016.1"/>
    <property type="molecule type" value="Genomic_DNA"/>
</dbReference>
<dbReference type="RefSeq" id="WP_002878196.1">
    <property type="nucleotide sequence ID" value="NC_008529.1"/>
</dbReference>
<dbReference type="SMR" id="Q04C06"/>
<dbReference type="GeneID" id="69668435"/>
<dbReference type="KEGG" id="lbu:LBUL_0359"/>
<dbReference type="HOGENOM" id="CLU_073626_1_0_9"/>
<dbReference type="BioCyc" id="LDEL321956:LBUL_RS01680-MONOMER"/>
<dbReference type="GO" id="GO:0022627">
    <property type="term" value="C:cytosolic small ribosomal subunit"/>
    <property type="evidence" value="ECO:0007669"/>
    <property type="project" value="TreeGrafter"/>
</dbReference>
<dbReference type="GO" id="GO:0019843">
    <property type="term" value="F:rRNA binding"/>
    <property type="evidence" value="ECO:0007669"/>
    <property type="project" value="UniProtKB-UniRule"/>
</dbReference>
<dbReference type="GO" id="GO:0003735">
    <property type="term" value="F:structural constituent of ribosome"/>
    <property type="evidence" value="ECO:0007669"/>
    <property type="project" value="InterPro"/>
</dbReference>
<dbReference type="GO" id="GO:0006412">
    <property type="term" value="P:translation"/>
    <property type="evidence" value="ECO:0007669"/>
    <property type="project" value="UniProtKB-UniRule"/>
</dbReference>
<dbReference type="CDD" id="cd00364">
    <property type="entry name" value="Ribosomal_uS17"/>
    <property type="match status" value="1"/>
</dbReference>
<dbReference type="Gene3D" id="2.40.50.140">
    <property type="entry name" value="Nucleic acid-binding proteins"/>
    <property type="match status" value="1"/>
</dbReference>
<dbReference type="HAMAP" id="MF_01345_B">
    <property type="entry name" value="Ribosomal_uS17_B"/>
    <property type="match status" value="1"/>
</dbReference>
<dbReference type="InterPro" id="IPR012340">
    <property type="entry name" value="NA-bd_OB-fold"/>
</dbReference>
<dbReference type="InterPro" id="IPR000266">
    <property type="entry name" value="Ribosomal_uS17"/>
</dbReference>
<dbReference type="InterPro" id="IPR019984">
    <property type="entry name" value="Ribosomal_uS17_bact/chlr"/>
</dbReference>
<dbReference type="InterPro" id="IPR019979">
    <property type="entry name" value="Ribosomal_uS17_CS"/>
</dbReference>
<dbReference type="NCBIfam" id="NF004123">
    <property type="entry name" value="PRK05610.1"/>
    <property type="match status" value="1"/>
</dbReference>
<dbReference type="NCBIfam" id="TIGR03635">
    <property type="entry name" value="uS17_bact"/>
    <property type="match status" value="1"/>
</dbReference>
<dbReference type="PANTHER" id="PTHR10744">
    <property type="entry name" value="40S RIBOSOMAL PROTEIN S11 FAMILY MEMBER"/>
    <property type="match status" value="1"/>
</dbReference>
<dbReference type="PANTHER" id="PTHR10744:SF1">
    <property type="entry name" value="SMALL RIBOSOMAL SUBUNIT PROTEIN US17M"/>
    <property type="match status" value="1"/>
</dbReference>
<dbReference type="Pfam" id="PF00366">
    <property type="entry name" value="Ribosomal_S17"/>
    <property type="match status" value="1"/>
</dbReference>
<dbReference type="PRINTS" id="PR00973">
    <property type="entry name" value="RIBOSOMALS17"/>
</dbReference>
<dbReference type="SUPFAM" id="SSF50249">
    <property type="entry name" value="Nucleic acid-binding proteins"/>
    <property type="match status" value="1"/>
</dbReference>
<dbReference type="PROSITE" id="PS00056">
    <property type="entry name" value="RIBOSOMAL_S17"/>
    <property type="match status" value="1"/>
</dbReference>
<gene>
    <name evidence="1" type="primary">rpsQ</name>
    <name type="ordered locus">LBUL_0359</name>
</gene>
<comment type="function">
    <text evidence="1">One of the primary rRNA binding proteins, it binds specifically to the 5'-end of 16S ribosomal RNA.</text>
</comment>
<comment type="subunit">
    <text evidence="1">Part of the 30S ribosomal subunit.</text>
</comment>
<comment type="similarity">
    <text evidence="1">Belongs to the universal ribosomal protein uS17 family.</text>
</comment>
<evidence type="ECO:0000255" key="1">
    <source>
        <dbReference type="HAMAP-Rule" id="MF_01345"/>
    </source>
</evidence>
<evidence type="ECO:0000305" key="2"/>
<keyword id="KW-0687">Ribonucleoprotein</keyword>
<keyword id="KW-0689">Ribosomal protein</keyword>
<keyword id="KW-0694">RNA-binding</keyword>
<keyword id="KW-0699">rRNA-binding</keyword>
<accession>Q04C06</accession>
<reference key="1">
    <citation type="journal article" date="2006" name="Proc. Natl. Acad. Sci. U.S.A.">
        <title>Comparative genomics of the lactic acid bacteria.</title>
        <authorList>
            <person name="Makarova K.S."/>
            <person name="Slesarev A."/>
            <person name="Wolf Y.I."/>
            <person name="Sorokin A."/>
            <person name="Mirkin B."/>
            <person name="Koonin E.V."/>
            <person name="Pavlov A."/>
            <person name="Pavlova N."/>
            <person name="Karamychev V."/>
            <person name="Polouchine N."/>
            <person name="Shakhova V."/>
            <person name="Grigoriev I."/>
            <person name="Lou Y."/>
            <person name="Rohksar D."/>
            <person name="Lucas S."/>
            <person name="Huang K."/>
            <person name="Goodstein D.M."/>
            <person name="Hawkins T."/>
            <person name="Plengvidhya V."/>
            <person name="Welker D."/>
            <person name="Hughes J."/>
            <person name="Goh Y."/>
            <person name="Benson A."/>
            <person name="Baldwin K."/>
            <person name="Lee J.-H."/>
            <person name="Diaz-Muniz I."/>
            <person name="Dosti B."/>
            <person name="Smeianov V."/>
            <person name="Wechter W."/>
            <person name="Barabote R."/>
            <person name="Lorca G."/>
            <person name="Altermann E."/>
            <person name="Barrangou R."/>
            <person name="Ganesan B."/>
            <person name="Xie Y."/>
            <person name="Rawsthorne H."/>
            <person name="Tamir D."/>
            <person name="Parker C."/>
            <person name="Breidt F."/>
            <person name="Broadbent J.R."/>
            <person name="Hutkins R."/>
            <person name="O'Sullivan D."/>
            <person name="Steele J."/>
            <person name="Unlu G."/>
            <person name="Saier M.H. Jr."/>
            <person name="Klaenhammer T."/>
            <person name="Richardson P."/>
            <person name="Kozyavkin S."/>
            <person name="Weimer B.C."/>
            <person name="Mills D.A."/>
        </authorList>
    </citation>
    <scope>NUCLEOTIDE SEQUENCE [LARGE SCALE GENOMIC DNA]</scope>
    <source>
        <strain>ATCC BAA-365 / Lb-18</strain>
    </source>
</reference>
<feature type="chain" id="PRO_1000054968" description="Small ribosomal subunit protein uS17">
    <location>
        <begin position="1"/>
        <end position="88"/>
    </location>
</feature>
<proteinExistence type="inferred from homology"/>
<name>RS17_LACDB</name>
<sequence length="88" mass="10510">MSESIERNRRHVYQGRVVSDKMDKTIVVVVDTYKNHPVYSKRTRYSKKYYAMDENNEAKVGDIVRIMETRPLSRTKRFRLVDIVKKSV</sequence>